<protein>
    <recommendedName>
        <fullName>Uncharacterized protein pXO2-67/BXB0090/GBAA_pXO2_0090</fullName>
    </recommendedName>
</protein>
<dbReference type="EMBL" id="AF188935">
    <property type="protein sequence ID" value="AAF13672.1"/>
    <property type="status" value="ALT_INIT"/>
    <property type="molecule type" value="Genomic_DNA"/>
</dbReference>
<dbReference type="EMBL" id="AE011191">
    <property type="protein sequence ID" value="AAM26241.1"/>
    <property type="molecule type" value="Genomic_DNA"/>
</dbReference>
<dbReference type="EMBL" id="AE017335">
    <property type="protein sequence ID" value="AAT29020.2"/>
    <property type="molecule type" value="Genomic_DNA"/>
</dbReference>
<dbReference type="RefSeq" id="NP_053222.1">
    <property type="nucleotide sequence ID" value="NC_002146.1"/>
</dbReference>
<dbReference type="RefSeq" id="WP_000577110.1">
    <property type="nucleotide sequence ID" value="NC_002146.1"/>
</dbReference>
<dbReference type="KEGG" id="bar:GBAA_pXO2_0090"/>
<dbReference type="HOGENOM" id="CLU_3164149_0_0_9"/>
<dbReference type="Proteomes" id="UP000000594">
    <property type="component" value="Plasmid pXO2"/>
</dbReference>
<geneLocation type="plasmid">
    <name>pXO2</name>
</geneLocation>
<keyword id="KW-0614">Plasmid</keyword>
<keyword id="KW-1185">Reference proteome</keyword>
<accession>Q9RMW7</accession>
<accession>Q8KYC6</accession>
<proteinExistence type="predicted"/>
<gene>
    <name type="ordered locus">pXO2-67</name>
    <name type="ordered locus">BXB0090</name>
    <name type="ordered locus">GBAA_pXO2_0090</name>
</gene>
<evidence type="ECO:0000305" key="1"/>
<name>Y6590_BACAN</name>
<feature type="chain" id="PRO_0000216859" description="Uncharacterized protein pXO2-67/BXB0090/GBAA_pXO2_0090">
    <location>
        <begin position="1"/>
        <end position="58"/>
    </location>
</feature>
<organism>
    <name type="scientific">Bacillus anthracis</name>
    <dbReference type="NCBI Taxonomy" id="1392"/>
    <lineage>
        <taxon>Bacteria</taxon>
        <taxon>Bacillati</taxon>
        <taxon>Bacillota</taxon>
        <taxon>Bacilli</taxon>
        <taxon>Bacillales</taxon>
        <taxon>Bacillaceae</taxon>
        <taxon>Bacillus</taxon>
        <taxon>Bacillus cereus group</taxon>
    </lineage>
</organism>
<sequence length="58" mass="6782">MIFPLFGANVLMVVVKSVKNENKEPFFRRGLKNINTKECIVNILIICDSYIKIYNLYN</sequence>
<reference key="1">
    <citation type="journal article" date="1999" name="J. Appl. Microbiol.">
        <title>Sequence, assembly and analysis of pXO1 and pXO2.</title>
        <authorList>
            <person name="Okinaka R.T."/>
            <person name="Cloud K."/>
            <person name="Hampton O."/>
            <person name="Hoffmaster A."/>
            <person name="Hill K.K."/>
            <person name="Keim P."/>
            <person name="Koehler T."/>
            <person name="Lamke G."/>
            <person name="Kumano S."/>
            <person name="Manter D."/>
            <person name="Martinez Y."/>
            <person name="Ricke D."/>
            <person name="Svensson R."/>
            <person name="Jackson P.J."/>
        </authorList>
    </citation>
    <scope>NUCLEOTIDE SEQUENCE [GENOMIC DNA]</scope>
    <source>
        <strain>Pasteur</strain>
    </source>
</reference>
<reference key="2">
    <citation type="journal article" date="2002" name="Science">
        <title>Comparative genome sequencing for discovery of novel polymorphisms in Bacillus anthracis.</title>
        <authorList>
            <person name="Read T.D."/>
            <person name="Salzberg S.L."/>
            <person name="Pop M."/>
            <person name="Shumway M.F."/>
            <person name="Umayam L."/>
            <person name="Jiang L."/>
            <person name="Holtzapple E."/>
            <person name="Busch J.D."/>
            <person name="Smith K.L."/>
            <person name="Schupp J.M."/>
            <person name="Solomon D."/>
            <person name="Keim P."/>
            <person name="Fraser C.M."/>
        </authorList>
    </citation>
    <scope>NUCLEOTIDE SEQUENCE [GENOMIC DNA]</scope>
    <source>
        <strain>Ames / isolate Florida / A2012</strain>
    </source>
</reference>
<reference key="3">
    <citation type="journal article" date="2009" name="J. Bacteriol.">
        <title>The complete genome sequence of Bacillus anthracis Ames 'Ancestor'.</title>
        <authorList>
            <person name="Ravel J."/>
            <person name="Jiang L."/>
            <person name="Stanley S.T."/>
            <person name="Wilson M.R."/>
            <person name="Decker R.S."/>
            <person name="Read T.D."/>
            <person name="Worsham P."/>
            <person name="Keim P.S."/>
            <person name="Salzberg S.L."/>
            <person name="Fraser-Liggett C.M."/>
            <person name="Rasko D.A."/>
        </authorList>
    </citation>
    <scope>NUCLEOTIDE SEQUENCE [LARGE SCALE GENOMIC DNA]</scope>
    <source>
        <strain>Ames ancestor</strain>
    </source>
</reference>
<comment type="sequence caution" evidence="1">
    <conflict type="erroneous initiation">
        <sequence resource="EMBL-CDS" id="AAF13672"/>
    </conflict>
</comment>